<proteinExistence type="inferred from homology"/>
<gene>
    <name evidence="1" type="primary">esxQ</name>
    <name type="ordered locus">BQ2027_MB3042C</name>
</gene>
<evidence type="ECO:0000250" key="1">
    <source>
        <dbReference type="UniProtKB" id="P9WNJ1"/>
    </source>
</evidence>
<evidence type="ECO:0000305" key="2"/>
<comment type="subcellular location">
    <subcellularLocation>
        <location evidence="1">Secreted</location>
    </subcellularLocation>
    <text evidence="1">Probably secreted via the ESX-3 / type VII secretion system (T7SS).</text>
</comment>
<comment type="similarity">
    <text evidence="2">Belongs to the WXG100 family. ESAT-6 subfamily.</text>
</comment>
<accession>P64092</accession>
<accession>A0A1R3Y3N2</accession>
<accession>O53264</accession>
<accession>X2BMU7</accession>
<sequence length="120" mass="12954">MSQSMYSYPAMTANVGDMAGYTGTTQSLGADIASERTAPSRACQGDLGMSHQDWQAQWNQAMEALARAYRRCRRALRQIGVLERPVGDSSDCGTIRVGSFRGRWLDPRHAGPATAADAGD</sequence>
<reference key="1">
    <citation type="journal article" date="2003" name="Proc. Natl. Acad. Sci. U.S.A.">
        <title>The complete genome sequence of Mycobacterium bovis.</title>
        <authorList>
            <person name="Garnier T."/>
            <person name="Eiglmeier K."/>
            <person name="Camus J.-C."/>
            <person name="Medina N."/>
            <person name="Mansoor H."/>
            <person name="Pryor M."/>
            <person name="Duthoy S."/>
            <person name="Grondin S."/>
            <person name="Lacroix C."/>
            <person name="Monsempe C."/>
            <person name="Simon S."/>
            <person name="Harris B."/>
            <person name="Atkin R."/>
            <person name="Doggett J."/>
            <person name="Mayes R."/>
            <person name="Keating L."/>
            <person name="Wheeler P.R."/>
            <person name="Parkhill J."/>
            <person name="Barrell B.G."/>
            <person name="Cole S.T."/>
            <person name="Gordon S.V."/>
            <person name="Hewinson R.G."/>
        </authorList>
    </citation>
    <scope>NUCLEOTIDE SEQUENCE [LARGE SCALE GENOMIC DNA]</scope>
    <source>
        <strain>ATCC BAA-935 / AF2122/97</strain>
    </source>
</reference>
<reference key="2">
    <citation type="journal article" date="2017" name="Genome Announc.">
        <title>Updated reference genome sequence and annotation of Mycobacterium bovis AF2122/97.</title>
        <authorList>
            <person name="Malone K.M."/>
            <person name="Farrell D."/>
            <person name="Stuber T.P."/>
            <person name="Schubert O.T."/>
            <person name="Aebersold R."/>
            <person name="Robbe-Austerman S."/>
            <person name="Gordon S.V."/>
        </authorList>
    </citation>
    <scope>NUCLEOTIDE SEQUENCE [LARGE SCALE GENOMIC DNA]</scope>
    <scope>GENOME REANNOTATION</scope>
    <source>
        <strain>ATCC BAA-935 / AF2122/97</strain>
    </source>
</reference>
<dbReference type="EMBL" id="LT708304">
    <property type="protein sequence ID" value="SIU01666.1"/>
    <property type="molecule type" value="Genomic_DNA"/>
</dbReference>
<dbReference type="RefSeq" id="NP_856687.1">
    <property type="nucleotide sequence ID" value="NC_002945.3"/>
</dbReference>
<dbReference type="RefSeq" id="WP_003415272.1">
    <property type="nucleotide sequence ID" value="NC_002945.4"/>
</dbReference>
<dbReference type="SMR" id="P64092"/>
<dbReference type="GeneID" id="45427007"/>
<dbReference type="KEGG" id="mbo:BQ2027_MB3042C"/>
<dbReference type="PATRIC" id="fig|233413.5.peg.3342"/>
<dbReference type="Proteomes" id="UP000001419">
    <property type="component" value="Chromosome"/>
</dbReference>
<dbReference type="GO" id="GO:0005576">
    <property type="term" value="C:extracellular region"/>
    <property type="evidence" value="ECO:0007669"/>
    <property type="project" value="UniProtKB-SubCell"/>
</dbReference>
<dbReference type="Gene3D" id="1.10.287.1060">
    <property type="entry name" value="ESAT-6-like"/>
    <property type="match status" value="1"/>
</dbReference>
<dbReference type="InterPro" id="IPR036689">
    <property type="entry name" value="ESAT-6-like_sf"/>
</dbReference>
<dbReference type="SUPFAM" id="SSF140453">
    <property type="entry name" value="EsxAB dimer-like"/>
    <property type="match status" value="1"/>
</dbReference>
<feature type="chain" id="PRO_0000167809" description="ESAT-6-like protein EsxQ">
    <location>
        <begin position="1"/>
        <end position="120"/>
    </location>
</feature>
<protein>
    <recommendedName>
        <fullName evidence="1">ESAT-6-like protein EsxQ</fullName>
    </recommendedName>
</protein>
<organism>
    <name type="scientific">Mycobacterium bovis (strain ATCC BAA-935 / AF2122/97)</name>
    <dbReference type="NCBI Taxonomy" id="233413"/>
    <lineage>
        <taxon>Bacteria</taxon>
        <taxon>Bacillati</taxon>
        <taxon>Actinomycetota</taxon>
        <taxon>Actinomycetes</taxon>
        <taxon>Mycobacteriales</taxon>
        <taxon>Mycobacteriaceae</taxon>
        <taxon>Mycobacterium</taxon>
        <taxon>Mycobacterium tuberculosis complex</taxon>
    </lineage>
</organism>
<name>ESXQ_MYCBO</name>
<keyword id="KW-1185">Reference proteome</keyword>
<keyword id="KW-0964">Secreted</keyword>